<keyword id="KW-0413">Isomerase</keyword>
<keyword id="KW-1185">Reference proteome</keyword>
<keyword id="KW-0697">Rotamase</keyword>
<dbReference type="EC" id="5.2.1.8"/>
<dbReference type="EMBL" id="AAHF01000016">
    <property type="protein sequence ID" value="EAL84551.1"/>
    <property type="molecule type" value="Genomic_DNA"/>
</dbReference>
<dbReference type="RefSeq" id="XP_746589.1">
    <property type="nucleotide sequence ID" value="XM_741496.1"/>
</dbReference>
<dbReference type="SMR" id="Q4W9R2"/>
<dbReference type="STRING" id="330879.Q4W9R2"/>
<dbReference type="EnsemblFungi" id="EAL84551">
    <property type="protein sequence ID" value="EAL84551"/>
    <property type="gene ID" value="AFUA_4G04020"/>
</dbReference>
<dbReference type="GeneID" id="3503911"/>
<dbReference type="KEGG" id="afm:AFUA_4G04020"/>
<dbReference type="VEuPathDB" id="FungiDB:Afu4g04020"/>
<dbReference type="eggNOG" id="KOG0544">
    <property type="taxonomic scope" value="Eukaryota"/>
</dbReference>
<dbReference type="HOGENOM" id="CLU_013615_12_1_1"/>
<dbReference type="InParanoid" id="Q4W9R2"/>
<dbReference type="OMA" id="FTQATMG"/>
<dbReference type="OrthoDB" id="1902587at2759"/>
<dbReference type="Proteomes" id="UP000002530">
    <property type="component" value="Chromosome 4"/>
</dbReference>
<dbReference type="GO" id="GO:0005737">
    <property type="term" value="C:cytoplasm"/>
    <property type="evidence" value="ECO:0000318"/>
    <property type="project" value="GO_Central"/>
</dbReference>
<dbReference type="GO" id="GO:0003755">
    <property type="term" value="F:peptidyl-prolyl cis-trans isomerase activity"/>
    <property type="evidence" value="ECO:0000318"/>
    <property type="project" value="GO_Central"/>
</dbReference>
<dbReference type="FunFam" id="3.10.50.40:FF:000050">
    <property type="entry name" value="Peptidylprolyl isomerase"/>
    <property type="match status" value="1"/>
</dbReference>
<dbReference type="Gene3D" id="3.10.50.40">
    <property type="match status" value="1"/>
</dbReference>
<dbReference type="InterPro" id="IPR050689">
    <property type="entry name" value="FKBP-type_PPIase"/>
</dbReference>
<dbReference type="InterPro" id="IPR046357">
    <property type="entry name" value="PPIase_dom_sf"/>
</dbReference>
<dbReference type="InterPro" id="IPR001179">
    <property type="entry name" value="PPIase_FKBP_dom"/>
</dbReference>
<dbReference type="PANTHER" id="PTHR10516:SF443">
    <property type="entry name" value="FK506-BINDING PROTEIN 59-RELATED"/>
    <property type="match status" value="1"/>
</dbReference>
<dbReference type="PANTHER" id="PTHR10516">
    <property type="entry name" value="PEPTIDYL-PROLYL CIS-TRANS ISOMERASE"/>
    <property type="match status" value="1"/>
</dbReference>
<dbReference type="Pfam" id="PF00254">
    <property type="entry name" value="FKBP_C"/>
    <property type="match status" value="1"/>
</dbReference>
<dbReference type="SUPFAM" id="SSF54534">
    <property type="entry name" value="FKBP-like"/>
    <property type="match status" value="1"/>
</dbReference>
<dbReference type="PROSITE" id="PS50059">
    <property type="entry name" value="FKBP_PPIASE"/>
    <property type="match status" value="1"/>
</dbReference>
<organism>
    <name type="scientific">Aspergillus fumigatus (strain ATCC MYA-4609 / CBS 101355 / FGSC A1100 / Af293)</name>
    <name type="common">Neosartorya fumigata</name>
    <dbReference type="NCBI Taxonomy" id="330879"/>
    <lineage>
        <taxon>Eukaryota</taxon>
        <taxon>Fungi</taxon>
        <taxon>Dikarya</taxon>
        <taxon>Ascomycota</taxon>
        <taxon>Pezizomycotina</taxon>
        <taxon>Eurotiomycetes</taxon>
        <taxon>Eurotiomycetidae</taxon>
        <taxon>Eurotiales</taxon>
        <taxon>Aspergillaceae</taxon>
        <taxon>Aspergillus</taxon>
        <taxon>Aspergillus subgen. Fumigati</taxon>
    </lineage>
</organism>
<accession>Q4W9R2</accession>
<feature type="chain" id="PRO_0000233319" description="FK506-binding protein 1B">
    <location>
        <begin position="1"/>
        <end position="120"/>
    </location>
</feature>
<feature type="domain" description="PPIase FKBP-type" evidence="2">
    <location>
        <begin position="20"/>
        <end position="115"/>
    </location>
</feature>
<feature type="region of interest" description="Disordered" evidence="3">
    <location>
        <begin position="1"/>
        <end position="26"/>
    </location>
</feature>
<sequence length="120" mass="13214">MGLEKQTLRMGNGKDHPQPGDPVELNYTGYLYDESNPDHHKGKEFDSSKRRGPLKATIGAGDVIRGWDEGVRQMSLGEKAILTMSGEYAYGEKGFPGLIPPNASLVFEVELLKIKDHGLD</sequence>
<name>FKB1B_ASPFU</name>
<reference key="1">
    <citation type="journal article" date="2005" name="Nature">
        <title>Genomic sequence of the pathogenic and allergenic filamentous fungus Aspergillus fumigatus.</title>
        <authorList>
            <person name="Nierman W.C."/>
            <person name="Pain A."/>
            <person name="Anderson M.J."/>
            <person name="Wortman J.R."/>
            <person name="Kim H.S."/>
            <person name="Arroyo J."/>
            <person name="Berriman M."/>
            <person name="Abe K."/>
            <person name="Archer D.B."/>
            <person name="Bermejo C."/>
            <person name="Bennett J.W."/>
            <person name="Bowyer P."/>
            <person name="Chen D."/>
            <person name="Collins M."/>
            <person name="Coulsen R."/>
            <person name="Davies R."/>
            <person name="Dyer P.S."/>
            <person name="Farman M.L."/>
            <person name="Fedorova N."/>
            <person name="Fedorova N.D."/>
            <person name="Feldblyum T.V."/>
            <person name="Fischer R."/>
            <person name="Fosker N."/>
            <person name="Fraser A."/>
            <person name="Garcia J.L."/>
            <person name="Garcia M.J."/>
            <person name="Goble A."/>
            <person name="Goldman G.H."/>
            <person name="Gomi K."/>
            <person name="Griffith-Jones S."/>
            <person name="Gwilliam R."/>
            <person name="Haas B.J."/>
            <person name="Haas H."/>
            <person name="Harris D.E."/>
            <person name="Horiuchi H."/>
            <person name="Huang J."/>
            <person name="Humphray S."/>
            <person name="Jimenez J."/>
            <person name="Keller N."/>
            <person name="Khouri H."/>
            <person name="Kitamoto K."/>
            <person name="Kobayashi T."/>
            <person name="Konzack S."/>
            <person name="Kulkarni R."/>
            <person name="Kumagai T."/>
            <person name="Lafton A."/>
            <person name="Latge J.-P."/>
            <person name="Li W."/>
            <person name="Lord A."/>
            <person name="Lu C."/>
            <person name="Majoros W.H."/>
            <person name="May G.S."/>
            <person name="Miller B.L."/>
            <person name="Mohamoud Y."/>
            <person name="Molina M."/>
            <person name="Monod M."/>
            <person name="Mouyna I."/>
            <person name="Mulligan S."/>
            <person name="Murphy L.D."/>
            <person name="O'Neil S."/>
            <person name="Paulsen I."/>
            <person name="Penalva M.A."/>
            <person name="Pertea M."/>
            <person name="Price C."/>
            <person name="Pritchard B.L."/>
            <person name="Quail M.A."/>
            <person name="Rabbinowitsch E."/>
            <person name="Rawlins N."/>
            <person name="Rajandream M.A."/>
            <person name="Reichard U."/>
            <person name="Renauld H."/>
            <person name="Robson G.D."/>
            <person name="Rodriguez de Cordoba S."/>
            <person name="Rodriguez-Pena J.M."/>
            <person name="Ronning C.M."/>
            <person name="Rutter S."/>
            <person name="Salzberg S.L."/>
            <person name="Sanchez M."/>
            <person name="Sanchez-Ferrero J.C."/>
            <person name="Saunders D."/>
            <person name="Seeger K."/>
            <person name="Squares R."/>
            <person name="Squares S."/>
            <person name="Takeuchi M."/>
            <person name="Tekaia F."/>
            <person name="Turner G."/>
            <person name="Vazquez de Aldana C.R."/>
            <person name="Weidman J."/>
            <person name="White O."/>
            <person name="Woodward J.R."/>
            <person name="Yu J.-H."/>
            <person name="Fraser C.M."/>
            <person name="Galagan J.E."/>
            <person name="Asai K."/>
            <person name="Machida M."/>
            <person name="Hall N."/>
            <person name="Barrell B.G."/>
            <person name="Denning D.W."/>
        </authorList>
    </citation>
    <scope>NUCLEOTIDE SEQUENCE [LARGE SCALE GENOMIC DNA]</scope>
    <source>
        <strain>ATCC MYA-4609 / CBS 101355 / FGSC A1100 / Af293</strain>
    </source>
</reference>
<protein>
    <recommendedName>
        <fullName>FK506-binding protein 1B</fullName>
        <shortName>FKBP</shortName>
        <ecNumber>5.2.1.8</ecNumber>
    </recommendedName>
    <alternativeName>
        <fullName>Peptidyl-prolyl cis-trans isomerase</fullName>
        <shortName>PPIase</shortName>
    </alternativeName>
    <alternativeName>
        <fullName>Rapamycin-binding protein</fullName>
    </alternativeName>
</protein>
<proteinExistence type="inferred from homology"/>
<gene>
    <name type="primary">fpr1B</name>
    <name type="ORF">AFUA_4G04020</name>
</gene>
<evidence type="ECO:0000250" key="1"/>
<evidence type="ECO:0000255" key="2">
    <source>
        <dbReference type="PROSITE-ProRule" id="PRU00277"/>
    </source>
</evidence>
<evidence type="ECO:0000256" key="3">
    <source>
        <dbReference type="SAM" id="MobiDB-lite"/>
    </source>
</evidence>
<evidence type="ECO:0000305" key="4"/>
<comment type="function">
    <text evidence="1">PPIases accelerate the folding of proteins. It catalyzes the cis-trans isomerization of proline imidic peptide bonds in oligopeptides (By similarity).</text>
</comment>
<comment type="catalytic activity">
    <reaction>
        <text>[protein]-peptidylproline (omega=180) = [protein]-peptidylproline (omega=0)</text>
        <dbReference type="Rhea" id="RHEA:16237"/>
        <dbReference type="Rhea" id="RHEA-COMP:10747"/>
        <dbReference type="Rhea" id="RHEA-COMP:10748"/>
        <dbReference type="ChEBI" id="CHEBI:83833"/>
        <dbReference type="ChEBI" id="CHEBI:83834"/>
        <dbReference type="EC" id="5.2.1.8"/>
    </reaction>
</comment>
<comment type="activity regulation">
    <text evidence="1">Inhibited by both FK506 and rapamycin.</text>
</comment>
<comment type="similarity">
    <text evidence="4">Belongs to the FKBP-type PPIase family. FKBP1 subfamily.</text>
</comment>